<accession>Q5PNK6</accession>
<feature type="signal peptide" evidence="1">
    <location>
        <begin position="1"/>
        <end position="33"/>
    </location>
</feature>
<feature type="chain" id="PRO_0000259709" description="Uncharacterized protein YobH">
    <location>
        <begin position="34"/>
        <end position="79"/>
    </location>
</feature>
<reference key="1">
    <citation type="journal article" date="2004" name="Nat. Genet.">
        <title>Comparison of genome degradation in Paratyphi A and Typhi, human-restricted serovars of Salmonella enterica that cause typhoid.</title>
        <authorList>
            <person name="McClelland M."/>
            <person name="Sanderson K.E."/>
            <person name="Clifton S.W."/>
            <person name="Latreille P."/>
            <person name="Porwollik S."/>
            <person name="Sabo A."/>
            <person name="Meyer R."/>
            <person name="Bieri T."/>
            <person name="Ozersky P."/>
            <person name="McLellan M."/>
            <person name="Harkins C.R."/>
            <person name="Wang C."/>
            <person name="Nguyen C."/>
            <person name="Berghoff A."/>
            <person name="Elliott G."/>
            <person name="Kohlberg S."/>
            <person name="Strong C."/>
            <person name="Du F."/>
            <person name="Carter J."/>
            <person name="Kremizki C."/>
            <person name="Layman D."/>
            <person name="Leonard S."/>
            <person name="Sun H."/>
            <person name="Fulton L."/>
            <person name="Nash W."/>
            <person name="Miner T."/>
            <person name="Minx P."/>
            <person name="Delehaunty K."/>
            <person name="Fronick C."/>
            <person name="Magrini V."/>
            <person name="Nhan M."/>
            <person name="Warren W."/>
            <person name="Florea L."/>
            <person name="Spieth J."/>
            <person name="Wilson R.K."/>
        </authorList>
    </citation>
    <scope>NUCLEOTIDE SEQUENCE [LARGE SCALE GENOMIC DNA]</scope>
    <source>
        <strain>ATCC 9150 / SARB42</strain>
    </source>
</reference>
<organism>
    <name type="scientific">Salmonella paratyphi A (strain ATCC 9150 / SARB42)</name>
    <dbReference type="NCBI Taxonomy" id="295319"/>
    <lineage>
        <taxon>Bacteria</taxon>
        <taxon>Pseudomonadati</taxon>
        <taxon>Pseudomonadota</taxon>
        <taxon>Gammaproteobacteria</taxon>
        <taxon>Enterobacterales</taxon>
        <taxon>Enterobacteriaceae</taxon>
        <taxon>Salmonella</taxon>
    </lineage>
</organism>
<proteinExistence type="inferred from homology"/>
<name>YOBH_SALPA</name>
<keyword id="KW-0732">Signal</keyword>
<gene>
    <name type="primary">yobH</name>
    <name type="ordered locus">SPA1032</name>
</gene>
<dbReference type="EMBL" id="CP000026">
    <property type="protein sequence ID" value="AAV77003.1"/>
    <property type="molecule type" value="Genomic_DNA"/>
</dbReference>
<dbReference type="RefSeq" id="WP_001239776.1">
    <property type="nucleotide sequence ID" value="NC_006511.1"/>
</dbReference>
<dbReference type="KEGG" id="spt:SPA1032"/>
<dbReference type="HOGENOM" id="CLU_179882_0_0_6"/>
<dbReference type="Proteomes" id="UP000008185">
    <property type="component" value="Chromosome"/>
</dbReference>
<dbReference type="InterPro" id="IPR025611">
    <property type="entry name" value="YobH"/>
</dbReference>
<dbReference type="Pfam" id="PF13996">
    <property type="entry name" value="YobH"/>
    <property type="match status" value="1"/>
</dbReference>
<evidence type="ECO:0000255" key="1"/>
<protein>
    <recommendedName>
        <fullName>Uncharacterized protein YobH</fullName>
    </recommendedName>
</protein>
<sequence length="79" mass="8441">MRLSIRAIVLFALVWIGLLMSGYGVLVGSKVNAAGLVLQCHYLTARGTSTAQYLHTNSGIIGFSDCPIFRKIATVVDNG</sequence>